<protein>
    <recommendedName>
        <fullName evidence="1">Urease accessory protein UreF 2</fullName>
    </recommendedName>
</protein>
<sequence length="224" mass="24939">MNSAWALLRLASPQLPIGGYSYSQGLEMAVEQSIVIDPQTAGRWIGDQLLLNLARFEAPLLLAHCEAAAVGDWGQLLQVSEQHRASRETRELHQESRQMGYSLQQLLNGLPELDRDARRFLEQTTEPHLALGWALAARTWRISPQDALAAWLWSWLENQLAVLMKTLPLGQQAAQRLTSELLPLLQQAQVNASAQDTHPAGSAAFGLALASMAHERQYSRLFRS</sequence>
<name>UREF2_PSESM</name>
<evidence type="ECO:0000255" key="1">
    <source>
        <dbReference type="HAMAP-Rule" id="MF_01385"/>
    </source>
</evidence>
<gene>
    <name evidence="1" type="primary">ureF2</name>
    <name type="ordered locus">PSPTO_4910</name>
</gene>
<accession>Q87VM6</accession>
<keyword id="KW-0143">Chaperone</keyword>
<keyword id="KW-0963">Cytoplasm</keyword>
<keyword id="KW-0996">Nickel insertion</keyword>
<keyword id="KW-1185">Reference proteome</keyword>
<reference key="1">
    <citation type="journal article" date="2003" name="Proc. Natl. Acad. Sci. U.S.A.">
        <title>The complete genome sequence of the Arabidopsis and tomato pathogen Pseudomonas syringae pv. tomato DC3000.</title>
        <authorList>
            <person name="Buell C.R."/>
            <person name="Joardar V."/>
            <person name="Lindeberg M."/>
            <person name="Selengut J."/>
            <person name="Paulsen I.T."/>
            <person name="Gwinn M.L."/>
            <person name="Dodson R.J."/>
            <person name="DeBoy R.T."/>
            <person name="Durkin A.S."/>
            <person name="Kolonay J.F."/>
            <person name="Madupu R."/>
            <person name="Daugherty S.C."/>
            <person name="Brinkac L.M."/>
            <person name="Beanan M.J."/>
            <person name="Haft D.H."/>
            <person name="Nelson W.C."/>
            <person name="Davidsen T.M."/>
            <person name="Zafar N."/>
            <person name="Zhou L."/>
            <person name="Liu J."/>
            <person name="Yuan Q."/>
            <person name="Khouri H.M."/>
            <person name="Fedorova N.B."/>
            <person name="Tran B."/>
            <person name="Russell D."/>
            <person name="Berry K.J."/>
            <person name="Utterback T.R."/>
            <person name="Van Aken S.E."/>
            <person name="Feldblyum T.V."/>
            <person name="D'Ascenzo M."/>
            <person name="Deng W.-L."/>
            <person name="Ramos A.R."/>
            <person name="Alfano J.R."/>
            <person name="Cartinhour S."/>
            <person name="Chatterjee A.K."/>
            <person name="Delaney T.P."/>
            <person name="Lazarowitz S.G."/>
            <person name="Martin G.B."/>
            <person name="Schneider D.J."/>
            <person name="Tang X."/>
            <person name="Bender C.L."/>
            <person name="White O."/>
            <person name="Fraser C.M."/>
            <person name="Collmer A."/>
        </authorList>
    </citation>
    <scope>NUCLEOTIDE SEQUENCE [LARGE SCALE GENOMIC DNA]</scope>
    <source>
        <strain>ATCC BAA-871 / DC3000</strain>
    </source>
</reference>
<dbReference type="EMBL" id="AE016853">
    <property type="protein sequence ID" value="AAO58338.1"/>
    <property type="molecule type" value="Genomic_DNA"/>
</dbReference>
<dbReference type="RefSeq" id="NP_794643.1">
    <property type="nucleotide sequence ID" value="NC_004578.1"/>
</dbReference>
<dbReference type="RefSeq" id="WP_005763065.1">
    <property type="nucleotide sequence ID" value="NC_004578.1"/>
</dbReference>
<dbReference type="SMR" id="Q87VM6"/>
<dbReference type="STRING" id="223283.PSPTO_4910"/>
<dbReference type="DNASU" id="1186593"/>
<dbReference type="GeneID" id="1186593"/>
<dbReference type="KEGG" id="pst:PSPTO_4910"/>
<dbReference type="PATRIC" id="fig|223283.9.peg.5023"/>
<dbReference type="eggNOG" id="COG0830">
    <property type="taxonomic scope" value="Bacteria"/>
</dbReference>
<dbReference type="HOGENOM" id="CLU_049215_2_1_6"/>
<dbReference type="OrthoDB" id="9798772at2"/>
<dbReference type="PhylomeDB" id="Q87VM6"/>
<dbReference type="Proteomes" id="UP000002515">
    <property type="component" value="Chromosome"/>
</dbReference>
<dbReference type="GO" id="GO:0005737">
    <property type="term" value="C:cytoplasm"/>
    <property type="evidence" value="ECO:0007669"/>
    <property type="project" value="UniProtKB-SubCell"/>
</dbReference>
<dbReference type="GO" id="GO:0016151">
    <property type="term" value="F:nickel cation binding"/>
    <property type="evidence" value="ECO:0007669"/>
    <property type="project" value="UniProtKB-UniRule"/>
</dbReference>
<dbReference type="Gene3D" id="1.10.4190.10">
    <property type="entry name" value="Urease accessory protein UreF"/>
    <property type="match status" value="1"/>
</dbReference>
<dbReference type="HAMAP" id="MF_01385">
    <property type="entry name" value="UreF"/>
    <property type="match status" value="1"/>
</dbReference>
<dbReference type="InterPro" id="IPR002639">
    <property type="entry name" value="UreF"/>
</dbReference>
<dbReference type="InterPro" id="IPR038277">
    <property type="entry name" value="UreF_sf"/>
</dbReference>
<dbReference type="PANTHER" id="PTHR33620">
    <property type="entry name" value="UREASE ACCESSORY PROTEIN F"/>
    <property type="match status" value="1"/>
</dbReference>
<dbReference type="PANTHER" id="PTHR33620:SF1">
    <property type="entry name" value="UREASE ACCESSORY PROTEIN F"/>
    <property type="match status" value="1"/>
</dbReference>
<dbReference type="Pfam" id="PF01730">
    <property type="entry name" value="UreF"/>
    <property type="match status" value="1"/>
</dbReference>
<dbReference type="PIRSF" id="PIRSF009467">
    <property type="entry name" value="Ureas_acces_UreF"/>
    <property type="match status" value="1"/>
</dbReference>
<comment type="function">
    <text evidence="1">Required for maturation of urease via the functional incorporation of the urease nickel metallocenter.</text>
</comment>
<comment type="subunit">
    <text evidence="1">UreD, UreF and UreG form a complex that acts as a GTP-hydrolysis-dependent molecular chaperone, activating the urease apoprotein by helping to assemble the nickel containing metallocenter of UreC. The UreE protein probably delivers the nickel.</text>
</comment>
<comment type="subcellular location">
    <subcellularLocation>
        <location evidence="1">Cytoplasm</location>
    </subcellularLocation>
</comment>
<comment type="similarity">
    <text evidence="1">Belongs to the UreF family.</text>
</comment>
<feature type="chain" id="PRO_0000344156" description="Urease accessory protein UreF 2">
    <location>
        <begin position="1"/>
        <end position="224"/>
    </location>
</feature>
<organism>
    <name type="scientific">Pseudomonas syringae pv. tomato (strain ATCC BAA-871 / DC3000)</name>
    <dbReference type="NCBI Taxonomy" id="223283"/>
    <lineage>
        <taxon>Bacteria</taxon>
        <taxon>Pseudomonadati</taxon>
        <taxon>Pseudomonadota</taxon>
        <taxon>Gammaproteobacteria</taxon>
        <taxon>Pseudomonadales</taxon>
        <taxon>Pseudomonadaceae</taxon>
        <taxon>Pseudomonas</taxon>
    </lineage>
</organism>
<proteinExistence type="inferred from homology"/>